<gene>
    <name evidence="1" type="primary">pelA</name>
    <name type="ordered locus">Tneu_1534</name>
</gene>
<sequence length="330" mass="37142">MKYEIDAKRRTVRVVPEREEDLYFVYLLVERGDVVRGWTVREYKPEGAKEGERVKMYLAVRVESLEYHKFRGSLRIRGPVVEVQEGVEGVKGRRHTFDVVPGREIEIEKAAEFPLDVVEEILKMAQALMPKVLLVSIDDEEAAFAYITALGVELIQVVHNASKGEESLFDGYLESVRKQVDELSRRLKPDKLVVAGPAMLVEHIARYIRGDKAPQGSGGLAGVYEFIRSGLYDELKTQMGVKAYEKLIHMAATSRESVAIGPQEVEEAASLGRVDFVLVLDSYIKESPEKAWVLLSQIYKTKGRIYIVREDTEVGAGIRAMGGIAAVLRW</sequence>
<evidence type="ECO:0000255" key="1">
    <source>
        <dbReference type="HAMAP-Rule" id="MF_01853"/>
    </source>
</evidence>
<comment type="function">
    <text evidence="1">May function in recognizing stalled ribosomes, interact with stem-loop structures in stalled mRNA molecules, and effect endonucleolytic cleavage of the mRNA. May play a role in the release non-functional ribosomes and degradation of damaged mRNAs. Has endoribonuclease activity.</text>
</comment>
<comment type="cofactor">
    <cofactor evidence="1">
        <name>a divalent metal cation</name>
        <dbReference type="ChEBI" id="CHEBI:60240"/>
    </cofactor>
</comment>
<comment type="subunit">
    <text evidence="1">Monomer.</text>
</comment>
<comment type="subcellular location">
    <subcellularLocation>
        <location evidence="1">Cytoplasm</location>
    </subcellularLocation>
</comment>
<comment type="domain">
    <text evidence="1">The N-terminal domain has the RNA-binding Sm fold. It harbors the endoribonuclease activity.</text>
</comment>
<comment type="similarity">
    <text evidence="1">Belongs to the eukaryotic release factor 1 family. Pelota subfamily.</text>
</comment>
<proteinExistence type="inferred from homology"/>
<name>PELO_PYRNV</name>
<keyword id="KW-0963">Cytoplasm</keyword>
<keyword id="KW-0255">Endonuclease</keyword>
<keyword id="KW-0378">Hydrolase</keyword>
<keyword id="KW-0479">Metal-binding</keyword>
<keyword id="KW-0540">Nuclease</keyword>
<protein>
    <recommendedName>
        <fullName evidence="1">Protein pelota homolog</fullName>
        <ecNumber evidence="1">3.1.-.-</ecNumber>
    </recommendedName>
</protein>
<organism>
    <name type="scientific">Pyrobaculum neutrophilum (strain DSM 2338 / JCM 9278 / NBRC 100436 / V24Sta)</name>
    <name type="common">Thermoproteus neutrophilus</name>
    <dbReference type="NCBI Taxonomy" id="444157"/>
    <lineage>
        <taxon>Archaea</taxon>
        <taxon>Thermoproteota</taxon>
        <taxon>Thermoprotei</taxon>
        <taxon>Thermoproteales</taxon>
        <taxon>Thermoproteaceae</taxon>
        <taxon>Pyrobaculum</taxon>
    </lineage>
</organism>
<feature type="chain" id="PRO_0000361827" description="Protein pelota homolog">
    <location>
        <begin position="1"/>
        <end position="330"/>
    </location>
</feature>
<dbReference type="EC" id="3.1.-.-" evidence="1"/>
<dbReference type="EMBL" id="CP001014">
    <property type="protein sequence ID" value="ACB40458.1"/>
    <property type="molecule type" value="Genomic_DNA"/>
</dbReference>
<dbReference type="RefSeq" id="WP_012350877.1">
    <property type="nucleotide sequence ID" value="NC_010525.1"/>
</dbReference>
<dbReference type="SMR" id="B1Y9M9"/>
<dbReference type="STRING" id="444157.Tneu_1534"/>
<dbReference type="GeneID" id="6166210"/>
<dbReference type="KEGG" id="tne:Tneu_1534"/>
<dbReference type="eggNOG" id="arCOG01741">
    <property type="taxonomic scope" value="Archaea"/>
</dbReference>
<dbReference type="HOGENOM" id="CLU_023334_0_0_2"/>
<dbReference type="OrthoDB" id="31300at2157"/>
<dbReference type="Proteomes" id="UP000001694">
    <property type="component" value="Chromosome"/>
</dbReference>
<dbReference type="GO" id="GO:0005737">
    <property type="term" value="C:cytoplasm"/>
    <property type="evidence" value="ECO:0007669"/>
    <property type="project" value="UniProtKB-SubCell"/>
</dbReference>
<dbReference type="GO" id="GO:0004519">
    <property type="term" value="F:endonuclease activity"/>
    <property type="evidence" value="ECO:0007669"/>
    <property type="project" value="UniProtKB-UniRule"/>
</dbReference>
<dbReference type="GO" id="GO:0046872">
    <property type="term" value="F:metal ion binding"/>
    <property type="evidence" value="ECO:0007669"/>
    <property type="project" value="UniProtKB-UniRule"/>
</dbReference>
<dbReference type="GO" id="GO:0070651">
    <property type="term" value="P:nonfunctional rRNA decay"/>
    <property type="evidence" value="ECO:0007669"/>
    <property type="project" value="TreeGrafter"/>
</dbReference>
<dbReference type="GO" id="GO:0070966">
    <property type="term" value="P:nuclear-transcribed mRNA catabolic process, no-go decay"/>
    <property type="evidence" value="ECO:0007669"/>
    <property type="project" value="InterPro"/>
</dbReference>
<dbReference type="GO" id="GO:0070481">
    <property type="term" value="P:nuclear-transcribed mRNA catabolic process, non-stop decay"/>
    <property type="evidence" value="ECO:0007669"/>
    <property type="project" value="InterPro"/>
</dbReference>
<dbReference type="GO" id="GO:0032790">
    <property type="term" value="P:ribosome disassembly"/>
    <property type="evidence" value="ECO:0007669"/>
    <property type="project" value="TreeGrafter"/>
</dbReference>
<dbReference type="GO" id="GO:0071025">
    <property type="term" value="P:RNA surveillance"/>
    <property type="evidence" value="ECO:0007669"/>
    <property type="project" value="InterPro"/>
</dbReference>
<dbReference type="Gene3D" id="3.30.1330.30">
    <property type="match status" value="1"/>
</dbReference>
<dbReference type="Gene3D" id="3.30.420.60">
    <property type="entry name" value="eRF1 domain 2"/>
    <property type="match status" value="1"/>
</dbReference>
<dbReference type="Gene3D" id="2.30.30.870">
    <property type="entry name" value="Pelota, domain A"/>
    <property type="match status" value="1"/>
</dbReference>
<dbReference type="HAMAP" id="MF_01853">
    <property type="entry name" value="PelO"/>
    <property type="match status" value="1"/>
</dbReference>
<dbReference type="InterPro" id="IPR042226">
    <property type="entry name" value="eFR1_2_sf"/>
</dbReference>
<dbReference type="InterPro" id="IPR005140">
    <property type="entry name" value="eRF1_1_Pelota"/>
</dbReference>
<dbReference type="InterPro" id="IPR005142">
    <property type="entry name" value="eRF1_3"/>
</dbReference>
<dbReference type="InterPro" id="IPR038069">
    <property type="entry name" value="Pelota/DOM34_N"/>
</dbReference>
<dbReference type="InterPro" id="IPR023521">
    <property type="entry name" value="Pelota_arc"/>
</dbReference>
<dbReference type="InterPro" id="IPR029064">
    <property type="entry name" value="Ribosomal_eL30-like_sf"/>
</dbReference>
<dbReference type="InterPro" id="IPR004405">
    <property type="entry name" value="Transl-rel_pelota"/>
</dbReference>
<dbReference type="PANTHER" id="PTHR10853">
    <property type="entry name" value="PELOTA"/>
    <property type="match status" value="1"/>
</dbReference>
<dbReference type="PANTHER" id="PTHR10853:SF0">
    <property type="entry name" value="PROTEIN PELOTA HOMOLOG"/>
    <property type="match status" value="1"/>
</dbReference>
<dbReference type="Pfam" id="PF03463">
    <property type="entry name" value="eRF1_1"/>
    <property type="match status" value="1"/>
</dbReference>
<dbReference type="Pfam" id="PF03465">
    <property type="entry name" value="eRF1_3"/>
    <property type="match status" value="1"/>
</dbReference>
<dbReference type="SMART" id="SM01194">
    <property type="entry name" value="eRF1_1"/>
    <property type="match status" value="1"/>
</dbReference>
<dbReference type="SUPFAM" id="SSF159065">
    <property type="entry name" value="Dom34/Pelota N-terminal domain-like"/>
    <property type="match status" value="1"/>
</dbReference>
<dbReference type="SUPFAM" id="SSF55315">
    <property type="entry name" value="L30e-like"/>
    <property type="match status" value="1"/>
</dbReference>
<dbReference type="SUPFAM" id="SSF53137">
    <property type="entry name" value="Translational machinery components"/>
    <property type="match status" value="1"/>
</dbReference>
<accession>B1Y9M9</accession>
<reference key="1">
    <citation type="submission" date="2008-03" db="EMBL/GenBank/DDBJ databases">
        <title>Complete sequence of Thermoproteus neutrophilus V24Sta.</title>
        <authorList>
            <consortium name="US DOE Joint Genome Institute"/>
            <person name="Copeland A."/>
            <person name="Lucas S."/>
            <person name="Lapidus A."/>
            <person name="Glavina del Rio T."/>
            <person name="Dalin E."/>
            <person name="Tice H."/>
            <person name="Bruce D."/>
            <person name="Goodwin L."/>
            <person name="Pitluck S."/>
            <person name="Sims D."/>
            <person name="Brettin T."/>
            <person name="Detter J.C."/>
            <person name="Han C."/>
            <person name="Kuske C.R."/>
            <person name="Schmutz J."/>
            <person name="Larimer F."/>
            <person name="Land M."/>
            <person name="Hauser L."/>
            <person name="Kyrpides N."/>
            <person name="Mikhailova N."/>
            <person name="Biddle J.F."/>
            <person name="Zhang Z."/>
            <person name="Fitz-Gibbon S.T."/>
            <person name="Lowe T.M."/>
            <person name="Saltikov C."/>
            <person name="House C.H."/>
            <person name="Richardson P."/>
        </authorList>
    </citation>
    <scope>NUCLEOTIDE SEQUENCE [LARGE SCALE GENOMIC DNA]</scope>
    <source>
        <strain>DSM 2338 / JCM 9278 / NBRC 100436 / V24Sta</strain>
    </source>
</reference>